<dbReference type="EC" id="5.4.99.12" evidence="1"/>
<dbReference type="EMBL" id="FM177140">
    <property type="protein sequence ID" value="CAQ67705.1"/>
    <property type="molecule type" value="Genomic_DNA"/>
</dbReference>
<dbReference type="SMR" id="B3WAI6"/>
<dbReference type="KEGG" id="lcb:LCABL_26390"/>
<dbReference type="HOGENOM" id="CLU_014673_0_1_9"/>
<dbReference type="GO" id="GO:0003723">
    <property type="term" value="F:RNA binding"/>
    <property type="evidence" value="ECO:0007669"/>
    <property type="project" value="InterPro"/>
</dbReference>
<dbReference type="GO" id="GO:0160147">
    <property type="term" value="F:tRNA pseudouridine(38-40) synthase activity"/>
    <property type="evidence" value="ECO:0007669"/>
    <property type="project" value="UniProtKB-EC"/>
</dbReference>
<dbReference type="GO" id="GO:0031119">
    <property type="term" value="P:tRNA pseudouridine synthesis"/>
    <property type="evidence" value="ECO:0007669"/>
    <property type="project" value="UniProtKB-UniRule"/>
</dbReference>
<dbReference type="CDD" id="cd02570">
    <property type="entry name" value="PseudoU_synth_EcTruA"/>
    <property type="match status" value="1"/>
</dbReference>
<dbReference type="FunFam" id="3.30.70.580:FF:000001">
    <property type="entry name" value="tRNA pseudouridine synthase A"/>
    <property type="match status" value="1"/>
</dbReference>
<dbReference type="Gene3D" id="3.30.70.660">
    <property type="entry name" value="Pseudouridine synthase I, catalytic domain, C-terminal subdomain"/>
    <property type="match status" value="1"/>
</dbReference>
<dbReference type="Gene3D" id="3.30.70.580">
    <property type="entry name" value="Pseudouridine synthase I, catalytic domain, N-terminal subdomain"/>
    <property type="match status" value="1"/>
</dbReference>
<dbReference type="HAMAP" id="MF_00171">
    <property type="entry name" value="TruA"/>
    <property type="match status" value="1"/>
</dbReference>
<dbReference type="InterPro" id="IPR020103">
    <property type="entry name" value="PsdUridine_synth_cat_dom_sf"/>
</dbReference>
<dbReference type="InterPro" id="IPR001406">
    <property type="entry name" value="PsdUridine_synth_TruA"/>
</dbReference>
<dbReference type="InterPro" id="IPR020097">
    <property type="entry name" value="PsdUridine_synth_TruA_a/b_dom"/>
</dbReference>
<dbReference type="InterPro" id="IPR020095">
    <property type="entry name" value="PsdUridine_synth_TruA_C"/>
</dbReference>
<dbReference type="InterPro" id="IPR020094">
    <property type="entry name" value="TruA/RsuA/RluB/E/F_N"/>
</dbReference>
<dbReference type="NCBIfam" id="TIGR00071">
    <property type="entry name" value="hisT_truA"/>
    <property type="match status" value="1"/>
</dbReference>
<dbReference type="PANTHER" id="PTHR11142">
    <property type="entry name" value="PSEUDOURIDYLATE SYNTHASE"/>
    <property type="match status" value="1"/>
</dbReference>
<dbReference type="PANTHER" id="PTHR11142:SF0">
    <property type="entry name" value="TRNA PSEUDOURIDINE SYNTHASE-LIKE 1"/>
    <property type="match status" value="1"/>
</dbReference>
<dbReference type="Pfam" id="PF01416">
    <property type="entry name" value="PseudoU_synth_1"/>
    <property type="match status" value="2"/>
</dbReference>
<dbReference type="PIRSF" id="PIRSF001430">
    <property type="entry name" value="tRNA_psdUrid_synth"/>
    <property type="match status" value="1"/>
</dbReference>
<dbReference type="SUPFAM" id="SSF55120">
    <property type="entry name" value="Pseudouridine synthase"/>
    <property type="match status" value="1"/>
</dbReference>
<name>TRUA_LACCB</name>
<gene>
    <name evidence="1" type="primary">truA</name>
    <name type="ordered locus">LCABL_26390</name>
</gene>
<evidence type="ECO:0000255" key="1">
    <source>
        <dbReference type="HAMAP-Rule" id="MF_00171"/>
    </source>
</evidence>
<reference key="1">
    <citation type="submission" date="2008-06" db="EMBL/GenBank/DDBJ databases">
        <title>Lactobacillus casei BL23 complete genome sequence.</title>
        <authorList>
            <person name="Maze A."/>
            <person name="Boel G."/>
            <person name="Bourand A."/>
            <person name="Loux V."/>
            <person name="Gibrat J.F."/>
            <person name="Zuniga M."/>
            <person name="Hartke A."/>
            <person name="Deutscher J."/>
        </authorList>
    </citation>
    <scope>NUCLEOTIDE SEQUENCE [LARGE SCALE GENOMIC DNA]</scope>
    <source>
        <strain>BL23</strain>
    </source>
</reference>
<sequence length="247" mass="27823">MTHYKVTLAYDGTNFAGYQVQPKQRTVQGVLQKALTKMTKGQPVHVDGSGRTDSGVHALGQVISFDYPGNIPAESMLKAMNSLMPLDIEILKAEIVDADFHARYSAKGKRYLYRVARGYYTNPFNRLYTGHYPYKLDVQRIEVALKDLVGTHDFTSFAASGGVIVDKVRTIYEATVREDPVTNEIIFEFYGNGFLYNMVRILVATALEIGNGRRDVHDFQRLFAVKDRQQARGTAPASGLYLKEVYY</sequence>
<keyword id="KW-0413">Isomerase</keyword>
<keyword id="KW-0819">tRNA processing</keyword>
<comment type="function">
    <text evidence="1">Formation of pseudouridine at positions 38, 39 and 40 in the anticodon stem and loop of transfer RNAs.</text>
</comment>
<comment type="catalytic activity">
    <reaction evidence="1">
        <text>uridine(38/39/40) in tRNA = pseudouridine(38/39/40) in tRNA</text>
        <dbReference type="Rhea" id="RHEA:22376"/>
        <dbReference type="Rhea" id="RHEA-COMP:10085"/>
        <dbReference type="Rhea" id="RHEA-COMP:10087"/>
        <dbReference type="ChEBI" id="CHEBI:65314"/>
        <dbReference type="ChEBI" id="CHEBI:65315"/>
        <dbReference type="EC" id="5.4.99.12"/>
    </reaction>
</comment>
<comment type="subunit">
    <text evidence="1">Homodimer.</text>
</comment>
<comment type="similarity">
    <text evidence="1">Belongs to the tRNA pseudouridine synthase TruA family.</text>
</comment>
<feature type="chain" id="PRO_1000097752" description="tRNA pseudouridine synthase A">
    <location>
        <begin position="1"/>
        <end position="247"/>
    </location>
</feature>
<feature type="active site" description="Nucleophile" evidence="1">
    <location>
        <position position="53"/>
    </location>
</feature>
<feature type="binding site" evidence="1">
    <location>
        <position position="111"/>
    </location>
    <ligand>
        <name>substrate</name>
    </ligand>
</feature>
<organism>
    <name type="scientific">Lacticaseibacillus casei (strain BL23)</name>
    <name type="common">Lactobacillus casei</name>
    <dbReference type="NCBI Taxonomy" id="543734"/>
    <lineage>
        <taxon>Bacteria</taxon>
        <taxon>Bacillati</taxon>
        <taxon>Bacillota</taxon>
        <taxon>Bacilli</taxon>
        <taxon>Lactobacillales</taxon>
        <taxon>Lactobacillaceae</taxon>
        <taxon>Lacticaseibacillus</taxon>
    </lineage>
</organism>
<protein>
    <recommendedName>
        <fullName evidence="1">tRNA pseudouridine synthase A</fullName>
        <ecNumber evidence="1">5.4.99.12</ecNumber>
    </recommendedName>
    <alternativeName>
        <fullName evidence="1">tRNA pseudouridine(38-40) synthase</fullName>
    </alternativeName>
    <alternativeName>
        <fullName evidence="1">tRNA pseudouridylate synthase I</fullName>
    </alternativeName>
    <alternativeName>
        <fullName evidence="1">tRNA-uridine isomerase I</fullName>
    </alternativeName>
</protein>
<accession>B3WAI6</accession>
<proteinExistence type="inferred from homology"/>